<proteinExistence type="inferred from homology"/>
<protein>
    <recommendedName>
        <fullName evidence="1">Cardiolipin synthase A</fullName>
        <shortName evidence="1">CL synthase</shortName>
        <ecNumber evidence="1">2.7.8.-</ecNumber>
    </recommendedName>
</protein>
<feature type="chain" id="PRO_0000201266" description="Cardiolipin synthase A">
    <location>
        <begin position="1"/>
        <end position="486"/>
    </location>
</feature>
<feature type="transmembrane region" description="Helical" evidence="1">
    <location>
        <begin position="3"/>
        <end position="23"/>
    </location>
</feature>
<feature type="transmembrane region" description="Helical" evidence="1">
    <location>
        <begin position="38"/>
        <end position="58"/>
    </location>
</feature>
<feature type="domain" description="PLD phosphodiesterase 1" evidence="1">
    <location>
        <begin position="219"/>
        <end position="246"/>
    </location>
</feature>
<feature type="domain" description="PLD phosphodiesterase 2" evidence="1">
    <location>
        <begin position="399"/>
        <end position="426"/>
    </location>
</feature>
<feature type="active site" evidence="1">
    <location>
        <position position="224"/>
    </location>
</feature>
<feature type="active site" evidence="1">
    <location>
        <position position="226"/>
    </location>
</feature>
<feature type="active site" evidence="1">
    <location>
        <position position="231"/>
    </location>
</feature>
<feature type="active site" evidence="1">
    <location>
        <position position="404"/>
    </location>
</feature>
<feature type="active site" evidence="1">
    <location>
        <position position="406"/>
    </location>
</feature>
<feature type="active site" evidence="1">
    <location>
        <position position="411"/>
    </location>
</feature>
<comment type="function">
    <text evidence="1">Catalyzes the reversible phosphatidyl group transfer from one phosphatidylglycerol molecule to another to form cardiolipin (CL) (diphosphatidylglycerol) and glycerol.</text>
</comment>
<comment type="catalytic activity">
    <reaction evidence="1">
        <text>2 a 1,2-diacyl-sn-glycero-3-phospho-(1'-sn-glycerol) = a cardiolipin + glycerol</text>
        <dbReference type="Rhea" id="RHEA:31451"/>
        <dbReference type="ChEBI" id="CHEBI:17754"/>
        <dbReference type="ChEBI" id="CHEBI:62237"/>
        <dbReference type="ChEBI" id="CHEBI:64716"/>
    </reaction>
</comment>
<comment type="subcellular location">
    <subcellularLocation>
        <location evidence="1">Cell inner membrane</location>
        <topology evidence="1">Multi-pass membrane protein</topology>
    </subcellularLocation>
</comment>
<comment type="similarity">
    <text evidence="1">Belongs to the phospholipase D family. Cardiolipin synthase subfamily. ClsA sub-subfamily.</text>
</comment>
<gene>
    <name evidence="1" type="primary">clsA</name>
    <name type="synonym">cls</name>
    <name type="ordered locus">SF1250</name>
    <name type="ordered locus">S1336</name>
</gene>
<keyword id="KW-0997">Cell inner membrane</keyword>
<keyword id="KW-1003">Cell membrane</keyword>
<keyword id="KW-0444">Lipid biosynthesis</keyword>
<keyword id="KW-0443">Lipid metabolism</keyword>
<keyword id="KW-0472">Membrane</keyword>
<keyword id="KW-0594">Phospholipid biosynthesis</keyword>
<keyword id="KW-1208">Phospholipid metabolism</keyword>
<keyword id="KW-1185">Reference proteome</keyword>
<keyword id="KW-0677">Repeat</keyword>
<keyword id="KW-0808">Transferase</keyword>
<keyword id="KW-0812">Transmembrane</keyword>
<keyword id="KW-1133">Transmembrane helix</keyword>
<reference key="1">
    <citation type="journal article" date="2002" name="Nucleic Acids Res.">
        <title>Genome sequence of Shigella flexneri 2a: insights into pathogenicity through comparison with genomes of Escherichia coli K12 and O157.</title>
        <authorList>
            <person name="Jin Q."/>
            <person name="Yuan Z."/>
            <person name="Xu J."/>
            <person name="Wang Y."/>
            <person name="Shen Y."/>
            <person name="Lu W."/>
            <person name="Wang J."/>
            <person name="Liu H."/>
            <person name="Yang J."/>
            <person name="Yang F."/>
            <person name="Zhang X."/>
            <person name="Zhang J."/>
            <person name="Yang G."/>
            <person name="Wu H."/>
            <person name="Qu D."/>
            <person name="Dong J."/>
            <person name="Sun L."/>
            <person name="Xue Y."/>
            <person name="Zhao A."/>
            <person name="Gao Y."/>
            <person name="Zhu J."/>
            <person name="Kan B."/>
            <person name="Ding K."/>
            <person name="Chen S."/>
            <person name="Cheng H."/>
            <person name="Yao Z."/>
            <person name="He B."/>
            <person name="Chen R."/>
            <person name="Ma D."/>
            <person name="Qiang B."/>
            <person name="Wen Y."/>
            <person name="Hou Y."/>
            <person name="Yu J."/>
        </authorList>
    </citation>
    <scope>NUCLEOTIDE SEQUENCE [LARGE SCALE GENOMIC DNA]</scope>
    <source>
        <strain>301 / Serotype 2a</strain>
    </source>
</reference>
<reference key="2">
    <citation type="journal article" date="2003" name="Infect. Immun.">
        <title>Complete genome sequence and comparative genomics of Shigella flexneri serotype 2a strain 2457T.</title>
        <authorList>
            <person name="Wei J."/>
            <person name="Goldberg M.B."/>
            <person name="Burland V."/>
            <person name="Venkatesan M.M."/>
            <person name="Deng W."/>
            <person name="Fournier G."/>
            <person name="Mayhew G.F."/>
            <person name="Plunkett G. III"/>
            <person name="Rose D.J."/>
            <person name="Darling A."/>
            <person name="Mau B."/>
            <person name="Perna N.T."/>
            <person name="Payne S.M."/>
            <person name="Runyen-Janecky L.J."/>
            <person name="Zhou S."/>
            <person name="Schwartz D.C."/>
            <person name="Blattner F.R."/>
        </authorList>
    </citation>
    <scope>NUCLEOTIDE SEQUENCE [LARGE SCALE GENOMIC DNA]</scope>
    <source>
        <strain>ATCC 700930 / 2457T / Serotype 2a</strain>
    </source>
</reference>
<evidence type="ECO:0000255" key="1">
    <source>
        <dbReference type="HAMAP-Rule" id="MF_00190"/>
    </source>
</evidence>
<dbReference type="EC" id="2.7.8.-" evidence="1"/>
<dbReference type="EMBL" id="AE005674">
    <property type="protein sequence ID" value="AAN42863.1"/>
    <property type="molecule type" value="Genomic_DNA"/>
</dbReference>
<dbReference type="EMBL" id="AE014073">
    <property type="protein sequence ID" value="AAP16748.1"/>
    <property type="molecule type" value="Genomic_DNA"/>
</dbReference>
<dbReference type="RefSeq" id="NP_707156.1">
    <property type="nucleotide sequence ID" value="NC_004337.2"/>
</dbReference>
<dbReference type="RefSeq" id="WP_000214515.1">
    <property type="nucleotide sequence ID" value="NZ_WPGW01000123.1"/>
</dbReference>
<dbReference type="SMR" id="Q83RM8"/>
<dbReference type="STRING" id="198214.SF1250"/>
<dbReference type="PaxDb" id="198214-SF1250"/>
<dbReference type="GeneID" id="1024195"/>
<dbReference type="KEGG" id="sfl:SF1250"/>
<dbReference type="KEGG" id="sfx:S1336"/>
<dbReference type="PATRIC" id="fig|198214.7.peg.1470"/>
<dbReference type="HOGENOM" id="CLU_038053_1_0_6"/>
<dbReference type="BRENDA" id="2.7.8.B10">
    <property type="organism ID" value="5712"/>
</dbReference>
<dbReference type="Proteomes" id="UP000001006">
    <property type="component" value="Chromosome"/>
</dbReference>
<dbReference type="Proteomes" id="UP000002673">
    <property type="component" value="Chromosome"/>
</dbReference>
<dbReference type="GO" id="GO:0005886">
    <property type="term" value="C:plasma membrane"/>
    <property type="evidence" value="ECO:0007669"/>
    <property type="project" value="UniProtKB-SubCell"/>
</dbReference>
<dbReference type="GO" id="GO:0008808">
    <property type="term" value="F:cardiolipin synthase activity"/>
    <property type="evidence" value="ECO:0007669"/>
    <property type="project" value="InterPro"/>
</dbReference>
<dbReference type="GO" id="GO:0032049">
    <property type="term" value="P:cardiolipin biosynthetic process"/>
    <property type="evidence" value="ECO:0007669"/>
    <property type="project" value="InterPro"/>
</dbReference>
<dbReference type="CDD" id="cd09152">
    <property type="entry name" value="PLDc_EcCLS_like_1"/>
    <property type="match status" value="1"/>
</dbReference>
<dbReference type="CDD" id="cd09158">
    <property type="entry name" value="PLDc_EcCLS_like_2"/>
    <property type="match status" value="1"/>
</dbReference>
<dbReference type="FunFam" id="3.30.870.10:FF:000002">
    <property type="entry name" value="Cardiolipin synthase A"/>
    <property type="match status" value="1"/>
</dbReference>
<dbReference type="FunFam" id="3.30.870.10:FF:000003">
    <property type="entry name" value="Cardiolipin synthase A"/>
    <property type="match status" value="1"/>
</dbReference>
<dbReference type="Gene3D" id="3.30.870.10">
    <property type="entry name" value="Endonuclease Chain A"/>
    <property type="match status" value="2"/>
</dbReference>
<dbReference type="HAMAP" id="MF_00190">
    <property type="entry name" value="Cardiolipin_synth_ClsA"/>
    <property type="match status" value="1"/>
</dbReference>
<dbReference type="InterPro" id="IPR022924">
    <property type="entry name" value="Cardiolipin_synthase"/>
</dbReference>
<dbReference type="InterPro" id="IPR030840">
    <property type="entry name" value="CL_synthase_A"/>
</dbReference>
<dbReference type="InterPro" id="IPR027379">
    <property type="entry name" value="CLS_N"/>
</dbReference>
<dbReference type="InterPro" id="IPR025202">
    <property type="entry name" value="PLD-like_dom"/>
</dbReference>
<dbReference type="InterPro" id="IPR001736">
    <property type="entry name" value="PLipase_D/transphosphatidylase"/>
</dbReference>
<dbReference type="NCBIfam" id="TIGR04265">
    <property type="entry name" value="bac_cardiolipin"/>
    <property type="match status" value="1"/>
</dbReference>
<dbReference type="PANTHER" id="PTHR21248">
    <property type="entry name" value="CARDIOLIPIN SYNTHASE"/>
    <property type="match status" value="1"/>
</dbReference>
<dbReference type="PANTHER" id="PTHR21248:SF22">
    <property type="entry name" value="PHOSPHOLIPASE D"/>
    <property type="match status" value="1"/>
</dbReference>
<dbReference type="Pfam" id="PF13091">
    <property type="entry name" value="PLDc_2"/>
    <property type="match status" value="2"/>
</dbReference>
<dbReference type="Pfam" id="PF13396">
    <property type="entry name" value="PLDc_N"/>
    <property type="match status" value="1"/>
</dbReference>
<dbReference type="SMART" id="SM00155">
    <property type="entry name" value="PLDc"/>
    <property type="match status" value="2"/>
</dbReference>
<dbReference type="SUPFAM" id="SSF56024">
    <property type="entry name" value="Phospholipase D/nuclease"/>
    <property type="match status" value="2"/>
</dbReference>
<dbReference type="PROSITE" id="PS50035">
    <property type="entry name" value="PLD"/>
    <property type="match status" value="2"/>
</dbReference>
<name>CLSA_SHIFL</name>
<accession>Q83RM8</accession>
<sequence>MTTVYTLVSWLAILGYWLLIAGVTLRILMKRRAVPSAMAWLLIIYILPLVGIIAYLAVGELHLGKRRAERARAMWPSTAKWLNDLKACKHIFAEENSSVAAPLFKLCERRQGIAGVKGNQLQLMTESDDVMQALIRDIQLARHNIEMVFYIWQPGGMADQVAESLMAAARRGIHCRLMLDSAGSVAFFRSPWPELMRNAGIEVVEALKVNLMRVFLRRMDLRQHRKMIMIDNYIAYTGSMNMVDPRYFKQDAGVGQWIDLMARMEGPIATAMGIIYSCDWEIETGKRILPPPPDVNIMPFEQASGHTIHTIASGPGFPEDLIHQALLTAAYSAHEYLIMTTPYFVPSDDLLHAICTAAQRGVDVSIILPRKNDSMLVGWASRAFFTELLAAGVKIYQFEGGLLHTKSVLVDGELSLVGTVNLDMRSLWLNFEITLAIDDKGFGADLAAVQDDYISRSRLLDARLWLKRPLWQRVAERLFYFFSPLL</sequence>
<organism>
    <name type="scientific">Shigella flexneri</name>
    <dbReference type="NCBI Taxonomy" id="623"/>
    <lineage>
        <taxon>Bacteria</taxon>
        <taxon>Pseudomonadati</taxon>
        <taxon>Pseudomonadota</taxon>
        <taxon>Gammaproteobacteria</taxon>
        <taxon>Enterobacterales</taxon>
        <taxon>Enterobacteriaceae</taxon>
        <taxon>Shigella</taxon>
    </lineage>
</organism>